<dbReference type="EMBL" id="BX950851">
    <property type="protein sequence ID" value="CAG76521.1"/>
    <property type="molecule type" value="Genomic_DNA"/>
</dbReference>
<dbReference type="RefSeq" id="WP_011095125.1">
    <property type="nucleotide sequence ID" value="NC_004547.2"/>
</dbReference>
<dbReference type="SMR" id="Q6D125"/>
<dbReference type="STRING" id="218491.ECA3623"/>
<dbReference type="DNASU" id="2885609"/>
<dbReference type="GeneID" id="57210297"/>
<dbReference type="KEGG" id="eca:ECA3623"/>
<dbReference type="PATRIC" id="fig|218491.5.peg.3676"/>
<dbReference type="eggNOG" id="COG1959">
    <property type="taxonomic scope" value="Bacteria"/>
</dbReference>
<dbReference type="HOGENOM" id="CLU_107144_2_1_6"/>
<dbReference type="OrthoDB" id="9795923at2"/>
<dbReference type="Proteomes" id="UP000007966">
    <property type="component" value="Chromosome"/>
</dbReference>
<dbReference type="GO" id="GO:0005829">
    <property type="term" value="C:cytosol"/>
    <property type="evidence" value="ECO:0007669"/>
    <property type="project" value="TreeGrafter"/>
</dbReference>
<dbReference type="GO" id="GO:0051537">
    <property type="term" value="F:2 iron, 2 sulfur cluster binding"/>
    <property type="evidence" value="ECO:0007669"/>
    <property type="project" value="UniProtKB-KW"/>
</dbReference>
<dbReference type="GO" id="GO:0003700">
    <property type="term" value="F:DNA-binding transcription factor activity"/>
    <property type="evidence" value="ECO:0007669"/>
    <property type="project" value="UniProtKB-UniRule"/>
</dbReference>
<dbReference type="GO" id="GO:0003690">
    <property type="term" value="F:double-stranded DNA binding"/>
    <property type="evidence" value="ECO:0007669"/>
    <property type="project" value="UniProtKB-UniRule"/>
</dbReference>
<dbReference type="GO" id="GO:0005506">
    <property type="term" value="F:iron ion binding"/>
    <property type="evidence" value="ECO:0007669"/>
    <property type="project" value="UniProtKB-UniRule"/>
</dbReference>
<dbReference type="GO" id="GO:0045892">
    <property type="term" value="P:negative regulation of DNA-templated transcription"/>
    <property type="evidence" value="ECO:0007669"/>
    <property type="project" value="InterPro"/>
</dbReference>
<dbReference type="FunFam" id="1.10.10.10:FF:000105">
    <property type="entry name" value="HTH-type transcriptional repressor NsrR"/>
    <property type="match status" value="1"/>
</dbReference>
<dbReference type="Gene3D" id="1.10.10.10">
    <property type="entry name" value="Winged helix-like DNA-binding domain superfamily/Winged helix DNA-binding domain"/>
    <property type="match status" value="1"/>
</dbReference>
<dbReference type="HAMAP" id="MF_01177">
    <property type="entry name" value="HTH_type_NsrR"/>
    <property type="match status" value="1"/>
</dbReference>
<dbReference type="InterPro" id="IPR030489">
    <property type="entry name" value="TR_Rrf2-type_CS"/>
</dbReference>
<dbReference type="InterPro" id="IPR000944">
    <property type="entry name" value="Tscrpt_reg_Rrf2"/>
</dbReference>
<dbReference type="InterPro" id="IPR023761">
    <property type="entry name" value="Tscrpt_rep_HTH_NsrR"/>
</dbReference>
<dbReference type="InterPro" id="IPR036388">
    <property type="entry name" value="WH-like_DNA-bd_sf"/>
</dbReference>
<dbReference type="InterPro" id="IPR036390">
    <property type="entry name" value="WH_DNA-bd_sf"/>
</dbReference>
<dbReference type="NCBIfam" id="NF008240">
    <property type="entry name" value="PRK11014.1"/>
    <property type="match status" value="1"/>
</dbReference>
<dbReference type="NCBIfam" id="TIGR00738">
    <property type="entry name" value="rrf2_super"/>
    <property type="match status" value="1"/>
</dbReference>
<dbReference type="PANTHER" id="PTHR33221:SF4">
    <property type="entry name" value="HTH-TYPE TRANSCRIPTIONAL REPRESSOR NSRR"/>
    <property type="match status" value="1"/>
</dbReference>
<dbReference type="PANTHER" id="PTHR33221">
    <property type="entry name" value="WINGED HELIX-TURN-HELIX TRANSCRIPTIONAL REGULATOR, RRF2 FAMILY"/>
    <property type="match status" value="1"/>
</dbReference>
<dbReference type="Pfam" id="PF02082">
    <property type="entry name" value="Rrf2"/>
    <property type="match status" value="1"/>
</dbReference>
<dbReference type="SUPFAM" id="SSF46785">
    <property type="entry name" value="Winged helix' DNA-binding domain"/>
    <property type="match status" value="1"/>
</dbReference>
<dbReference type="PROSITE" id="PS01332">
    <property type="entry name" value="HTH_RRF2_1"/>
    <property type="match status" value="1"/>
</dbReference>
<dbReference type="PROSITE" id="PS51197">
    <property type="entry name" value="HTH_RRF2_2"/>
    <property type="match status" value="1"/>
</dbReference>
<name>NSRR_PECAS</name>
<feature type="chain" id="PRO_0000268939" description="HTH-type transcriptional repressor NsrR">
    <location>
        <begin position="1"/>
        <end position="141"/>
    </location>
</feature>
<feature type="domain" description="HTH rrf2-type" evidence="1">
    <location>
        <begin position="2"/>
        <end position="129"/>
    </location>
</feature>
<feature type="DNA-binding region" description="H-T-H motif" evidence="1">
    <location>
        <begin position="28"/>
        <end position="51"/>
    </location>
</feature>
<feature type="binding site" evidence="1">
    <location>
        <position position="91"/>
    </location>
    <ligand>
        <name>[2Fe-2S] cluster</name>
        <dbReference type="ChEBI" id="CHEBI:190135"/>
    </ligand>
</feature>
<feature type="binding site" evidence="1">
    <location>
        <position position="96"/>
    </location>
    <ligand>
        <name>[2Fe-2S] cluster</name>
        <dbReference type="ChEBI" id="CHEBI:190135"/>
    </ligand>
</feature>
<feature type="binding site" evidence="1">
    <location>
        <position position="102"/>
    </location>
    <ligand>
        <name>[2Fe-2S] cluster</name>
        <dbReference type="ChEBI" id="CHEBI:190135"/>
    </ligand>
</feature>
<evidence type="ECO:0000255" key="1">
    <source>
        <dbReference type="HAMAP-Rule" id="MF_01177"/>
    </source>
</evidence>
<sequence>MQLTSFTDYGLRALIYMASLPSGKMTSISEVTEVYGVSRNHMVKIINQLSRAGLVMAVRGKNGGIRLGKPAETIRIGDVVRELEPLTLVNCSHEFCHITAACRLKQVLQQAVQNFLHELDQYTLADMVKENPPLYKLLLVE</sequence>
<organism>
    <name type="scientific">Pectobacterium atrosepticum (strain SCRI 1043 / ATCC BAA-672)</name>
    <name type="common">Erwinia carotovora subsp. atroseptica</name>
    <dbReference type="NCBI Taxonomy" id="218491"/>
    <lineage>
        <taxon>Bacteria</taxon>
        <taxon>Pseudomonadati</taxon>
        <taxon>Pseudomonadota</taxon>
        <taxon>Gammaproteobacteria</taxon>
        <taxon>Enterobacterales</taxon>
        <taxon>Pectobacteriaceae</taxon>
        <taxon>Pectobacterium</taxon>
    </lineage>
</organism>
<protein>
    <recommendedName>
        <fullName evidence="1">HTH-type transcriptional repressor NsrR</fullName>
    </recommendedName>
</protein>
<comment type="function">
    <text evidence="1">Nitric oxide-sensitive repressor of genes involved in protecting the cell against nitrosative stress. May require iron for activity.</text>
</comment>
<comment type="cofactor">
    <cofactor evidence="1">
        <name>[2Fe-2S] cluster</name>
        <dbReference type="ChEBI" id="CHEBI:190135"/>
    </cofactor>
    <text evidence="1">Binds 1 [2Fe-2S] cluster per subunit.</text>
</comment>
<keyword id="KW-0001">2Fe-2S</keyword>
<keyword id="KW-0238">DNA-binding</keyword>
<keyword id="KW-0408">Iron</keyword>
<keyword id="KW-0411">Iron-sulfur</keyword>
<keyword id="KW-0479">Metal-binding</keyword>
<keyword id="KW-1185">Reference proteome</keyword>
<keyword id="KW-0678">Repressor</keyword>
<keyword id="KW-0804">Transcription</keyword>
<keyword id="KW-0805">Transcription regulation</keyword>
<gene>
    <name evidence="1" type="primary">nsrR</name>
    <name type="ordered locus">ECA3623</name>
</gene>
<reference key="1">
    <citation type="journal article" date="2004" name="Proc. Natl. Acad. Sci. U.S.A.">
        <title>Genome sequence of the enterobacterial phytopathogen Erwinia carotovora subsp. atroseptica and characterization of virulence factors.</title>
        <authorList>
            <person name="Bell K.S."/>
            <person name="Sebaihia M."/>
            <person name="Pritchard L."/>
            <person name="Holden M.T.G."/>
            <person name="Hyman L.J."/>
            <person name="Holeva M.C."/>
            <person name="Thomson N.R."/>
            <person name="Bentley S.D."/>
            <person name="Churcher L.J.C."/>
            <person name="Mungall K."/>
            <person name="Atkin R."/>
            <person name="Bason N."/>
            <person name="Brooks K."/>
            <person name="Chillingworth T."/>
            <person name="Clark K."/>
            <person name="Doggett J."/>
            <person name="Fraser A."/>
            <person name="Hance Z."/>
            <person name="Hauser H."/>
            <person name="Jagels K."/>
            <person name="Moule S."/>
            <person name="Norbertczak H."/>
            <person name="Ormond D."/>
            <person name="Price C."/>
            <person name="Quail M.A."/>
            <person name="Sanders M."/>
            <person name="Walker D."/>
            <person name="Whitehead S."/>
            <person name="Salmond G.P.C."/>
            <person name="Birch P.R.J."/>
            <person name="Parkhill J."/>
            <person name="Toth I.K."/>
        </authorList>
    </citation>
    <scope>NUCLEOTIDE SEQUENCE [LARGE SCALE GENOMIC DNA]</scope>
    <source>
        <strain>SCRI 1043 / ATCC BAA-672</strain>
    </source>
</reference>
<accession>Q6D125</accession>
<proteinExistence type="inferred from homology"/>